<organism>
    <name type="scientific">Buxus microphylla</name>
    <name type="common">Littleleaf boxwood</name>
    <name type="synonym">Japanese boxwood</name>
    <dbReference type="NCBI Taxonomy" id="153571"/>
    <lineage>
        <taxon>Eukaryota</taxon>
        <taxon>Viridiplantae</taxon>
        <taxon>Streptophyta</taxon>
        <taxon>Embryophyta</taxon>
        <taxon>Tracheophyta</taxon>
        <taxon>Spermatophyta</taxon>
        <taxon>Magnoliopsida</taxon>
        <taxon>Buxales</taxon>
        <taxon>Buxaceae</taxon>
        <taxon>Buxus</taxon>
    </lineage>
</organism>
<sequence length="44" mass="5009">MRDLKTYLSVAPVLSTLWFGSLAGLLIEINRLFPDALTFPFFSF</sequence>
<comment type="function">
    <text evidence="1">May help in the organization of the PsaE and PsaF subunits.</text>
</comment>
<comment type="subcellular location">
    <subcellularLocation>
        <location evidence="1">Plastid</location>
        <location evidence="1">Chloroplast thylakoid membrane</location>
        <topology evidence="1">Single-pass membrane protein</topology>
    </subcellularLocation>
</comment>
<comment type="similarity">
    <text evidence="1">Belongs to the PsaJ family.</text>
</comment>
<feature type="chain" id="PRO_0000354131" description="Photosystem I reaction center subunit IX">
    <location>
        <begin position="1"/>
        <end position="44"/>
    </location>
</feature>
<feature type="transmembrane region" description="Helical" evidence="1">
    <location>
        <begin position="7"/>
        <end position="27"/>
    </location>
</feature>
<protein>
    <recommendedName>
        <fullName evidence="1">Photosystem I reaction center subunit IX</fullName>
    </recommendedName>
    <alternativeName>
        <fullName evidence="1">PSI-J</fullName>
    </alternativeName>
</protein>
<accession>A6MM56</accession>
<keyword id="KW-0150">Chloroplast</keyword>
<keyword id="KW-0472">Membrane</keyword>
<keyword id="KW-0602">Photosynthesis</keyword>
<keyword id="KW-0603">Photosystem I</keyword>
<keyword id="KW-0934">Plastid</keyword>
<keyword id="KW-0793">Thylakoid</keyword>
<keyword id="KW-0812">Transmembrane</keyword>
<keyword id="KW-1133">Transmembrane helix</keyword>
<geneLocation type="chloroplast"/>
<gene>
    <name evidence="1" type="primary">psaJ</name>
</gene>
<dbReference type="EMBL" id="EF380351">
    <property type="protein sequence ID" value="ABQ45269.1"/>
    <property type="molecule type" value="Genomic_DNA"/>
</dbReference>
<dbReference type="RefSeq" id="YP_001294204.1">
    <property type="nucleotide sequence ID" value="NC_009599.1"/>
</dbReference>
<dbReference type="SMR" id="A6MM56"/>
<dbReference type="GeneID" id="5236841"/>
<dbReference type="GO" id="GO:0009535">
    <property type="term" value="C:chloroplast thylakoid membrane"/>
    <property type="evidence" value="ECO:0007669"/>
    <property type="project" value="UniProtKB-SubCell"/>
</dbReference>
<dbReference type="GO" id="GO:0009522">
    <property type="term" value="C:photosystem I"/>
    <property type="evidence" value="ECO:0007669"/>
    <property type="project" value="UniProtKB-KW"/>
</dbReference>
<dbReference type="GO" id="GO:0015979">
    <property type="term" value="P:photosynthesis"/>
    <property type="evidence" value="ECO:0007669"/>
    <property type="project" value="UniProtKB-UniRule"/>
</dbReference>
<dbReference type="FunFam" id="1.20.5.510:FF:000001">
    <property type="entry name" value="Photosystem I reaction center subunit IX"/>
    <property type="match status" value="1"/>
</dbReference>
<dbReference type="Gene3D" id="1.20.5.510">
    <property type="entry name" value="Single helix bin"/>
    <property type="match status" value="1"/>
</dbReference>
<dbReference type="HAMAP" id="MF_00522">
    <property type="entry name" value="PSI_PsaJ"/>
    <property type="match status" value="1"/>
</dbReference>
<dbReference type="InterPro" id="IPR002615">
    <property type="entry name" value="PSI_PsaJ"/>
</dbReference>
<dbReference type="InterPro" id="IPR036062">
    <property type="entry name" value="PSI_PsaJ_sf"/>
</dbReference>
<dbReference type="PANTHER" id="PTHR36082">
    <property type="match status" value="1"/>
</dbReference>
<dbReference type="PANTHER" id="PTHR36082:SF2">
    <property type="entry name" value="PHOTOSYSTEM I REACTION CENTER SUBUNIT IX"/>
    <property type="match status" value="1"/>
</dbReference>
<dbReference type="Pfam" id="PF01701">
    <property type="entry name" value="PSI_PsaJ"/>
    <property type="match status" value="1"/>
</dbReference>
<dbReference type="SUPFAM" id="SSF81544">
    <property type="entry name" value="Subunit IX of photosystem I reaction centre, PsaJ"/>
    <property type="match status" value="1"/>
</dbReference>
<proteinExistence type="inferred from homology"/>
<name>PSAJ_BUXMI</name>
<evidence type="ECO:0000255" key="1">
    <source>
        <dbReference type="HAMAP-Rule" id="MF_00522"/>
    </source>
</evidence>
<reference key="1">
    <citation type="journal article" date="2007" name="Mol. Phylogenet. Evol.">
        <title>Phylogenetic and evolutionary implications of complete chloroplast genome sequences of four early-diverging angiosperms: Buxus (Buxaceae), Chloranthus (Chloranthaceae), Dioscorea (Dioscoreaceae), and Illicium (Schisandraceae).</title>
        <authorList>
            <person name="Hansen D.R."/>
            <person name="Dastidar S.G."/>
            <person name="Cai Z."/>
            <person name="Penaflor C."/>
            <person name="Kuehl J.V."/>
            <person name="Boore J.L."/>
            <person name="Jansen R.K."/>
        </authorList>
    </citation>
    <scope>NUCLEOTIDE SEQUENCE [LARGE SCALE GENOMIC DNA]</scope>
</reference>